<accession>B1AJJ2</accession>
<sequence length="79" mass="9136">MAKVTNNRNRKPRKKVCILSAKGIEHVDYKDVELLQRFINNNNKIASRRVTGASARMQRRIANAIKRARFVGLLPYVKE</sequence>
<evidence type="ECO:0000255" key="1">
    <source>
        <dbReference type="HAMAP-Rule" id="MF_00270"/>
    </source>
</evidence>
<evidence type="ECO:0000305" key="2"/>
<reference key="1">
    <citation type="submission" date="2008-02" db="EMBL/GenBank/DDBJ databases">
        <title>Genome sequence of Ureaplasma parvum serovar 3.</title>
        <authorList>
            <person name="Methe B.A."/>
            <person name="Glass J."/>
            <person name="Waites K."/>
            <person name="Shrivastava S."/>
        </authorList>
    </citation>
    <scope>NUCLEOTIDE SEQUENCE [LARGE SCALE GENOMIC DNA]</scope>
    <source>
        <strain>ATCC 27815 / 27 / NCTC 11736</strain>
    </source>
</reference>
<keyword id="KW-0687">Ribonucleoprotein</keyword>
<keyword id="KW-0689">Ribosomal protein</keyword>
<keyword id="KW-0694">RNA-binding</keyword>
<keyword id="KW-0699">rRNA-binding</keyword>
<feature type="chain" id="PRO_1000078720" description="Small ribosomal subunit protein bS18">
    <location>
        <begin position="1"/>
        <end position="79"/>
    </location>
</feature>
<proteinExistence type="inferred from homology"/>
<dbReference type="EMBL" id="CP000942">
    <property type="protein sequence ID" value="ACA33102.1"/>
    <property type="molecule type" value="Genomic_DNA"/>
</dbReference>
<dbReference type="RefSeq" id="WP_006688517.1">
    <property type="nucleotide sequence ID" value="NC_010503.1"/>
</dbReference>
<dbReference type="SMR" id="B1AJJ2"/>
<dbReference type="GeneID" id="29672529"/>
<dbReference type="KEGG" id="upa:UPA3_0589"/>
<dbReference type="HOGENOM" id="CLU_148710_2_2_14"/>
<dbReference type="Proteomes" id="UP000002162">
    <property type="component" value="Chromosome"/>
</dbReference>
<dbReference type="GO" id="GO:0022627">
    <property type="term" value="C:cytosolic small ribosomal subunit"/>
    <property type="evidence" value="ECO:0007669"/>
    <property type="project" value="TreeGrafter"/>
</dbReference>
<dbReference type="GO" id="GO:0070181">
    <property type="term" value="F:small ribosomal subunit rRNA binding"/>
    <property type="evidence" value="ECO:0007669"/>
    <property type="project" value="TreeGrafter"/>
</dbReference>
<dbReference type="GO" id="GO:0003735">
    <property type="term" value="F:structural constituent of ribosome"/>
    <property type="evidence" value="ECO:0007669"/>
    <property type="project" value="InterPro"/>
</dbReference>
<dbReference type="GO" id="GO:0006412">
    <property type="term" value="P:translation"/>
    <property type="evidence" value="ECO:0007669"/>
    <property type="project" value="UniProtKB-UniRule"/>
</dbReference>
<dbReference type="Gene3D" id="4.10.640.10">
    <property type="entry name" value="Ribosomal protein S18"/>
    <property type="match status" value="1"/>
</dbReference>
<dbReference type="HAMAP" id="MF_00270">
    <property type="entry name" value="Ribosomal_bS18"/>
    <property type="match status" value="1"/>
</dbReference>
<dbReference type="InterPro" id="IPR001648">
    <property type="entry name" value="Ribosomal_bS18"/>
</dbReference>
<dbReference type="InterPro" id="IPR036870">
    <property type="entry name" value="Ribosomal_bS18_sf"/>
</dbReference>
<dbReference type="NCBIfam" id="TIGR00165">
    <property type="entry name" value="S18"/>
    <property type="match status" value="1"/>
</dbReference>
<dbReference type="PANTHER" id="PTHR13479">
    <property type="entry name" value="30S RIBOSOMAL PROTEIN S18"/>
    <property type="match status" value="1"/>
</dbReference>
<dbReference type="PANTHER" id="PTHR13479:SF40">
    <property type="entry name" value="SMALL RIBOSOMAL SUBUNIT PROTEIN BS18M"/>
    <property type="match status" value="1"/>
</dbReference>
<dbReference type="Pfam" id="PF01084">
    <property type="entry name" value="Ribosomal_S18"/>
    <property type="match status" value="1"/>
</dbReference>
<dbReference type="PRINTS" id="PR00974">
    <property type="entry name" value="RIBOSOMALS18"/>
</dbReference>
<dbReference type="SUPFAM" id="SSF46911">
    <property type="entry name" value="Ribosomal protein S18"/>
    <property type="match status" value="1"/>
</dbReference>
<protein>
    <recommendedName>
        <fullName evidence="1">Small ribosomal subunit protein bS18</fullName>
    </recommendedName>
    <alternativeName>
        <fullName evidence="2">30S ribosomal protein S18</fullName>
    </alternativeName>
</protein>
<comment type="function">
    <text evidence="1">Binds as a heterodimer with protein bS6 to the central domain of the 16S rRNA, where it helps stabilize the platform of the 30S subunit.</text>
</comment>
<comment type="subunit">
    <text evidence="1">Part of the 30S ribosomal subunit. Forms a tight heterodimer with protein bS6.</text>
</comment>
<comment type="similarity">
    <text evidence="1">Belongs to the bacterial ribosomal protein bS18 family.</text>
</comment>
<organism>
    <name type="scientific">Ureaplasma parvum serovar 3 (strain ATCC 27815 / 27 / NCTC 11736)</name>
    <dbReference type="NCBI Taxonomy" id="505682"/>
    <lineage>
        <taxon>Bacteria</taxon>
        <taxon>Bacillati</taxon>
        <taxon>Mycoplasmatota</taxon>
        <taxon>Mycoplasmoidales</taxon>
        <taxon>Mycoplasmoidaceae</taxon>
        <taxon>Ureaplasma</taxon>
    </lineage>
</organism>
<gene>
    <name evidence="1" type="primary">rpsR</name>
    <name type="ordered locus">UPA3_0589</name>
</gene>
<name>RS18_UREP2</name>